<organism>
    <name type="scientific">Xanthomonas euvesicatoria pv. vesicatoria (strain 85-10)</name>
    <name type="common">Xanthomonas campestris pv. vesicatoria</name>
    <dbReference type="NCBI Taxonomy" id="316273"/>
    <lineage>
        <taxon>Bacteria</taxon>
        <taxon>Pseudomonadati</taxon>
        <taxon>Pseudomonadota</taxon>
        <taxon>Gammaproteobacteria</taxon>
        <taxon>Lysobacterales</taxon>
        <taxon>Lysobacteraceae</taxon>
        <taxon>Xanthomonas</taxon>
    </lineage>
</organism>
<sequence length="217" mass="24262">MNATTAPLPYSTTRLHELAHLLIANIRELAHAGWTPATSSNFSHRLDEQHAAITVSGRDKGRLVEENIMVVDFDGLAVGRPLRPSAETLLHTQLYRRFPEIGCVLHTHSPVQTIASRLYAGSGVIRLEGYELLKAFDGNTTHETAVEVPVFANTQDMQVLAAQVDALLDKQSMWGYLIEGHGLYAWGRNMAEARRHLEAFEFLLHCELELLKLRGTR</sequence>
<name>MTNB_XANE5</name>
<comment type="function">
    <text evidence="1">Catalyzes the dehydration of methylthioribulose-1-phosphate (MTRu-1-P) into 2,3-diketo-5-methylthiopentyl-1-phosphate (DK-MTP-1-P).</text>
</comment>
<comment type="catalytic activity">
    <reaction evidence="1">
        <text>5-(methylsulfanyl)-D-ribulose 1-phosphate = 5-methylsulfanyl-2,3-dioxopentyl phosphate + H2O</text>
        <dbReference type="Rhea" id="RHEA:15549"/>
        <dbReference type="ChEBI" id="CHEBI:15377"/>
        <dbReference type="ChEBI" id="CHEBI:58548"/>
        <dbReference type="ChEBI" id="CHEBI:58828"/>
        <dbReference type="EC" id="4.2.1.109"/>
    </reaction>
</comment>
<comment type="cofactor">
    <cofactor evidence="1">
        <name>Zn(2+)</name>
        <dbReference type="ChEBI" id="CHEBI:29105"/>
    </cofactor>
    <text evidence="1">Binds 1 zinc ion per subunit.</text>
</comment>
<comment type="pathway">
    <text evidence="1">Amino-acid biosynthesis; L-methionine biosynthesis via salvage pathway; L-methionine from S-methyl-5-thio-alpha-D-ribose 1-phosphate: step 2/6.</text>
</comment>
<comment type="similarity">
    <text evidence="1">Belongs to the aldolase class II family. MtnB subfamily.</text>
</comment>
<proteinExistence type="inferred from homology"/>
<reference key="1">
    <citation type="journal article" date="2005" name="J. Bacteriol.">
        <title>Insights into genome plasticity and pathogenicity of the plant pathogenic Bacterium Xanthomonas campestris pv. vesicatoria revealed by the complete genome sequence.</title>
        <authorList>
            <person name="Thieme F."/>
            <person name="Koebnik R."/>
            <person name="Bekel T."/>
            <person name="Berger C."/>
            <person name="Boch J."/>
            <person name="Buettner D."/>
            <person name="Caldana C."/>
            <person name="Gaigalat L."/>
            <person name="Goesmann A."/>
            <person name="Kay S."/>
            <person name="Kirchner O."/>
            <person name="Lanz C."/>
            <person name="Linke B."/>
            <person name="McHardy A.C."/>
            <person name="Meyer F."/>
            <person name="Mittenhuber G."/>
            <person name="Nies D.H."/>
            <person name="Niesbach-Kloesgen U."/>
            <person name="Patschkowski T."/>
            <person name="Rueckert C."/>
            <person name="Rupp O."/>
            <person name="Schneiker S."/>
            <person name="Schuster S.C."/>
            <person name="Vorhoelter F.J."/>
            <person name="Weber E."/>
            <person name="Puehler A."/>
            <person name="Bonas U."/>
            <person name="Bartels D."/>
            <person name="Kaiser O."/>
        </authorList>
    </citation>
    <scope>NUCLEOTIDE SEQUENCE [LARGE SCALE GENOMIC DNA]</scope>
    <source>
        <strain>85-10</strain>
    </source>
</reference>
<accession>Q3BUE6</accession>
<gene>
    <name evidence="1" type="primary">mtnB</name>
    <name type="ordered locus">XCV1886</name>
</gene>
<protein>
    <recommendedName>
        <fullName evidence="1">Methylthioribulose-1-phosphate dehydratase</fullName>
        <shortName evidence="1">MTRu-1-P dehydratase</shortName>
        <ecNumber evidence="1">4.2.1.109</ecNumber>
    </recommendedName>
</protein>
<dbReference type="EC" id="4.2.1.109" evidence="1"/>
<dbReference type="EMBL" id="AM039952">
    <property type="protein sequence ID" value="CAJ23563.1"/>
    <property type="molecule type" value="Genomic_DNA"/>
</dbReference>
<dbReference type="RefSeq" id="WP_011347193.1">
    <property type="nucleotide sequence ID" value="NZ_CP017190.1"/>
</dbReference>
<dbReference type="SMR" id="Q3BUE6"/>
<dbReference type="STRING" id="456327.BJD11_12995"/>
<dbReference type="KEGG" id="xcv:XCV1886"/>
<dbReference type="eggNOG" id="COG0235">
    <property type="taxonomic scope" value="Bacteria"/>
</dbReference>
<dbReference type="HOGENOM" id="CLU_006033_4_1_6"/>
<dbReference type="UniPathway" id="UPA00904">
    <property type="reaction ID" value="UER00875"/>
</dbReference>
<dbReference type="Proteomes" id="UP000007069">
    <property type="component" value="Chromosome"/>
</dbReference>
<dbReference type="GO" id="GO:0005737">
    <property type="term" value="C:cytoplasm"/>
    <property type="evidence" value="ECO:0007669"/>
    <property type="project" value="InterPro"/>
</dbReference>
<dbReference type="GO" id="GO:0046570">
    <property type="term" value="F:methylthioribulose 1-phosphate dehydratase activity"/>
    <property type="evidence" value="ECO:0007669"/>
    <property type="project" value="UniProtKB-UniRule"/>
</dbReference>
<dbReference type="GO" id="GO:0008270">
    <property type="term" value="F:zinc ion binding"/>
    <property type="evidence" value="ECO:0007669"/>
    <property type="project" value="UniProtKB-UniRule"/>
</dbReference>
<dbReference type="GO" id="GO:0019509">
    <property type="term" value="P:L-methionine salvage from methylthioadenosine"/>
    <property type="evidence" value="ECO:0007669"/>
    <property type="project" value="UniProtKB-UniRule"/>
</dbReference>
<dbReference type="GO" id="GO:0005996">
    <property type="term" value="P:monosaccharide metabolic process"/>
    <property type="evidence" value="ECO:0007669"/>
    <property type="project" value="UniProtKB-ARBA"/>
</dbReference>
<dbReference type="FunFam" id="3.40.225.10:FF:000007">
    <property type="entry name" value="Methylthioribulose-1-phosphate dehydratase"/>
    <property type="match status" value="1"/>
</dbReference>
<dbReference type="Gene3D" id="3.40.225.10">
    <property type="entry name" value="Class II aldolase/adducin N-terminal domain"/>
    <property type="match status" value="1"/>
</dbReference>
<dbReference type="HAMAP" id="MF_01677">
    <property type="entry name" value="Salvage_MtnB"/>
    <property type="match status" value="1"/>
</dbReference>
<dbReference type="InterPro" id="IPR001303">
    <property type="entry name" value="Aldolase_II/adducin_N"/>
</dbReference>
<dbReference type="InterPro" id="IPR036409">
    <property type="entry name" value="Aldolase_II/adducin_N_sf"/>
</dbReference>
<dbReference type="InterPro" id="IPR017714">
    <property type="entry name" value="MethylthioRu-1-P_deHdtase_MtnB"/>
</dbReference>
<dbReference type="NCBIfam" id="NF006672">
    <property type="entry name" value="PRK09220.1"/>
    <property type="match status" value="1"/>
</dbReference>
<dbReference type="NCBIfam" id="TIGR03328">
    <property type="entry name" value="salvage_mtnB"/>
    <property type="match status" value="1"/>
</dbReference>
<dbReference type="PANTHER" id="PTHR10640">
    <property type="entry name" value="METHYLTHIORIBULOSE-1-PHOSPHATE DEHYDRATASE"/>
    <property type="match status" value="1"/>
</dbReference>
<dbReference type="PANTHER" id="PTHR10640:SF7">
    <property type="entry name" value="METHYLTHIORIBULOSE-1-PHOSPHATE DEHYDRATASE"/>
    <property type="match status" value="1"/>
</dbReference>
<dbReference type="Pfam" id="PF00596">
    <property type="entry name" value="Aldolase_II"/>
    <property type="match status" value="1"/>
</dbReference>
<dbReference type="SMART" id="SM01007">
    <property type="entry name" value="Aldolase_II"/>
    <property type="match status" value="1"/>
</dbReference>
<dbReference type="SUPFAM" id="SSF53639">
    <property type="entry name" value="AraD/HMP-PK domain-like"/>
    <property type="match status" value="1"/>
</dbReference>
<keyword id="KW-0028">Amino-acid biosynthesis</keyword>
<keyword id="KW-0456">Lyase</keyword>
<keyword id="KW-0479">Metal-binding</keyword>
<keyword id="KW-0486">Methionine biosynthesis</keyword>
<keyword id="KW-0862">Zinc</keyword>
<evidence type="ECO:0000255" key="1">
    <source>
        <dbReference type="HAMAP-Rule" id="MF_01677"/>
    </source>
</evidence>
<feature type="chain" id="PRO_0000357114" description="Methylthioribulose-1-phosphate dehydratase">
    <location>
        <begin position="1"/>
        <end position="217"/>
    </location>
</feature>
<feature type="binding site" evidence="1">
    <location>
        <position position="106"/>
    </location>
    <ligand>
        <name>Zn(2+)</name>
        <dbReference type="ChEBI" id="CHEBI:29105"/>
    </ligand>
</feature>
<feature type="binding site" evidence="1">
    <location>
        <position position="108"/>
    </location>
    <ligand>
        <name>Zn(2+)</name>
        <dbReference type="ChEBI" id="CHEBI:29105"/>
    </ligand>
</feature>